<name>ACUK_ARTOC</name>
<reference key="1">
    <citation type="journal article" date="2012" name="MBio">
        <title>Comparative genome analysis of Trichophyton rubrum and related dermatophytes reveals candidate genes involved in infection.</title>
        <authorList>
            <person name="Martinez D.A."/>
            <person name="Oliver B.G."/>
            <person name="Graeser Y."/>
            <person name="Goldberg J.M."/>
            <person name="Li W."/>
            <person name="Martinez-Rossi N.M."/>
            <person name="Monod M."/>
            <person name="Shelest E."/>
            <person name="Barton R.C."/>
            <person name="Birch E."/>
            <person name="Brakhage A.A."/>
            <person name="Chen Z."/>
            <person name="Gurr S.J."/>
            <person name="Heiman D."/>
            <person name="Heitman J."/>
            <person name="Kosti I."/>
            <person name="Rossi A."/>
            <person name="Saif S."/>
            <person name="Samalova M."/>
            <person name="Saunders C.W."/>
            <person name="Shea T."/>
            <person name="Summerbell R.C."/>
            <person name="Xu J."/>
            <person name="Young S."/>
            <person name="Zeng Q."/>
            <person name="Birren B.W."/>
            <person name="Cuomo C.A."/>
            <person name="White T.C."/>
        </authorList>
    </citation>
    <scope>NUCLEOTIDE SEQUENCE [LARGE SCALE GENOMIC DNA]</scope>
    <source>
        <strain>ATCC MYA-4605 / CBS 113480</strain>
    </source>
</reference>
<gene>
    <name type="ORF">MCYG_04674</name>
</gene>
<evidence type="ECO:0000250" key="1"/>
<evidence type="ECO:0000255" key="2">
    <source>
        <dbReference type="PROSITE-ProRule" id="PRU00227"/>
    </source>
</evidence>
<evidence type="ECO:0000256" key="3">
    <source>
        <dbReference type="SAM" id="MobiDB-lite"/>
    </source>
</evidence>
<evidence type="ECO:0000305" key="4"/>
<organism>
    <name type="scientific">Arthroderma otae (strain ATCC MYA-4605 / CBS 113480)</name>
    <name type="common">Microsporum canis</name>
    <dbReference type="NCBI Taxonomy" id="554155"/>
    <lineage>
        <taxon>Eukaryota</taxon>
        <taxon>Fungi</taxon>
        <taxon>Dikarya</taxon>
        <taxon>Ascomycota</taxon>
        <taxon>Pezizomycotina</taxon>
        <taxon>Eurotiomycetes</taxon>
        <taxon>Eurotiomycetidae</taxon>
        <taxon>Onygenales</taxon>
        <taxon>Arthrodermataceae</taxon>
        <taxon>Microsporum</taxon>
    </lineage>
</organism>
<proteinExistence type="inferred from homology"/>
<dbReference type="EMBL" id="DS995704">
    <property type="protein sequence ID" value="EEQ31855.1"/>
    <property type="molecule type" value="Genomic_DNA"/>
</dbReference>
<dbReference type="RefSeq" id="XP_002846937.1">
    <property type="nucleotide sequence ID" value="XM_002846891.1"/>
</dbReference>
<dbReference type="SMR" id="C5FP02"/>
<dbReference type="STRING" id="554155.C5FP02"/>
<dbReference type="GeneID" id="9230052"/>
<dbReference type="VEuPathDB" id="FungiDB:MCYG_04674"/>
<dbReference type="eggNOG" id="ENOG502R1M5">
    <property type="taxonomic scope" value="Eukaryota"/>
</dbReference>
<dbReference type="HOGENOM" id="CLU_010748_1_0_1"/>
<dbReference type="OMA" id="VMTTCKL"/>
<dbReference type="OrthoDB" id="2538135at2759"/>
<dbReference type="Proteomes" id="UP000002035">
    <property type="component" value="Unassembled WGS sequence"/>
</dbReference>
<dbReference type="GO" id="GO:0005634">
    <property type="term" value="C:nucleus"/>
    <property type="evidence" value="ECO:0007669"/>
    <property type="project" value="UniProtKB-SubCell"/>
</dbReference>
<dbReference type="GO" id="GO:0000981">
    <property type="term" value="F:DNA-binding transcription factor activity, RNA polymerase II-specific"/>
    <property type="evidence" value="ECO:0007669"/>
    <property type="project" value="InterPro"/>
</dbReference>
<dbReference type="GO" id="GO:0000977">
    <property type="term" value="F:RNA polymerase II transcription regulatory region sequence-specific DNA binding"/>
    <property type="evidence" value="ECO:0007669"/>
    <property type="project" value="TreeGrafter"/>
</dbReference>
<dbReference type="GO" id="GO:0008270">
    <property type="term" value="F:zinc ion binding"/>
    <property type="evidence" value="ECO:0007669"/>
    <property type="project" value="InterPro"/>
</dbReference>
<dbReference type="GO" id="GO:0009267">
    <property type="term" value="P:cellular response to starvation"/>
    <property type="evidence" value="ECO:0007669"/>
    <property type="project" value="TreeGrafter"/>
</dbReference>
<dbReference type="GO" id="GO:0006094">
    <property type="term" value="P:gluconeogenesis"/>
    <property type="evidence" value="ECO:0007669"/>
    <property type="project" value="UniProtKB-KW"/>
</dbReference>
<dbReference type="CDD" id="cd00067">
    <property type="entry name" value="GAL4"/>
    <property type="match status" value="1"/>
</dbReference>
<dbReference type="InterPro" id="IPR050335">
    <property type="entry name" value="ERT1_acuK_gluconeogen_tf"/>
</dbReference>
<dbReference type="InterPro" id="IPR056751">
    <property type="entry name" value="PAS_13"/>
</dbReference>
<dbReference type="InterPro" id="IPR036864">
    <property type="entry name" value="Zn2-C6_fun-type_DNA-bd_sf"/>
</dbReference>
<dbReference type="InterPro" id="IPR001138">
    <property type="entry name" value="Zn2Cys6_DnaBD"/>
</dbReference>
<dbReference type="PANTHER" id="PTHR47659:SF1">
    <property type="entry name" value="TRANSCRIPTION ACTIVATOR OF GLUCONEOGENESIS ERT1"/>
    <property type="match status" value="1"/>
</dbReference>
<dbReference type="PANTHER" id="PTHR47659">
    <property type="entry name" value="ZN(II)2CYS6 TRANSCRIPTION FACTOR (EUROFUNG)-RELATED"/>
    <property type="match status" value="1"/>
</dbReference>
<dbReference type="Pfam" id="PF24990">
    <property type="entry name" value="PAS_13"/>
    <property type="match status" value="1"/>
</dbReference>
<dbReference type="SMART" id="SM00066">
    <property type="entry name" value="GAL4"/>
    <property type="match status" value="1"/>
</dbReference>
<dbReference type="SUPFAM" id="SSF57701">
    <property type="entry name" value="Zn2/Cys6 DNA-binding domain"/>
    <property type="match status" value="1"/>
</dbReference>
<dbReference type="PROSITE" id="PS50048">
    <property type="entry name" value="ZN2_CY6_FUNGAL_2"/>
    <property type="match status" value="1"/>
</dbReference>
<comment type="function">
    <text evidence="1">Transcription factor which regulates nonfermentable carbon utilization. Activator of gluconeogenetic genes (By similarity).</text>
</comment>
<comment type="subcellular location">
    <subcellularLocation>
        <location evidence="2">Nucleus</location>
    </subcellularLocation>
</comment>
<comment type="similarity">
    <text evidence="4">Belongs to the ERT1/acuK family.</text>
</comment>
<feature type="chain" id="PRO_0000406440" description="Transcription activator of gluconeogenesis MCYG_04674">
    <location>
        <begin position="1"/>
        <end position="739"/>
    </location>
</feature>
<feature type="DNA-binding region" description="Zn(2)-C6 fungal-type" evidence="2">
    <location>
        <begin position="65"/>
        <end position="93"/>
    </location>
</feature>
<feature type="region of interest" description="Disordered" evidence="3">
    <location>
        <begin position="1"/>
        <end position="62"/>
    </location>
</feature>
<feature type="region of interest" description="Disordered" evidence="3">
    <location>
        <begin position="174"/>
        <end position="223"/>
    </location>
</feature>
<feature type="region of interest" description="Disordered" evidence="3">
    <location>
        <begin position="264"/>
        <end position="308"/>
    </location>
</feature>
<feature type="region of interest" description="Disordered" evidence="3">
    <location>
        <begin position="380"/>
        <end position="420"/>
    </location>
</feature>
<feature type="region of interest" description="Disordered" evidence="3">
    <location>
        <begin position="537"/>
        <end position="574"/>
    </location>
</feature>
<feature type="region of interest" description="Disordered" evidence="3">
    <location>
        <begin position="639"/>
        <end position="668"/>
    </location>
</feature>
<feature type="compositionally biased region" description="Polar residues" evidence="3">
    <location>
        <begin position="1"/>
        <end position="33"/>
    </location>
</feature>
<feature type="compositionally biased region" description="Basic and acidic residues" evidence="3">
    <location>
        <begin position="40"/>
        <end position="55"/>
    </location>
</feature>
<feature type="compositionally biased region" description="Polar residues" evidence="3">
    <location>
        <begin position="267"/>
        <end position="284"/>
    </location>
</feature>
<feature type="compositionally biased region" description="Polar residues" evidence="3">
    <location>
        <begin position="397"/>
        <end position="411"/>
    </location>
</feature>
<feature type="compositionally biased region" description="Low complexity" evidence="3">
    <location>
        <begin position="547"/>
        <end position="557"/>
    </location>
</feature>
<feature type="compositionally biased region" description="Polar residues" evidence="3">
    <location>
        <begin position="562"/>
        <end position="574"/>
    </location>
</feature>
<feature type="compositionally biased region" description="Low complexity" evidence="3">
    <location>
        <begin position="653"/>
        <end position="664"/>
    </location>
</feature>
<accession>C5FP02</accession>
<sequence length="739" mass="79871">MSPHQTTGQESDNMAVNGENAQASSQYIQLNSEETTDTVAAEKKAAAAKAKDPSRPKRKKAKRACYACQRGHLTCGDERPCQRCIKRGFQDACHDGVRKKAKYLHDAPNEALMAGVGASLYNQRNTTQNSINGANAPSSASQQITSPNFYNAQQSPDYNGYSQTKAELQDSTIGPENFASQSPVSPTYQMGQPMPNQGLSPSLPQSASETPSTANGAPSQFNSAFFDPSDPALFNFDLASMNFGNHYGALEFGMLGHMATGVGDTPPSDNGAQRGSIGQNSSGTFGLAGSNFAESPSNQGPYLFGDSGMNDWTQSAPVNRRNMYGSNANMVAGNMSDKPHAFAIESAPANFASPASNESPMMTTSSATFEDAANATAFNSRQNTSLPQQQQQQRQQPVVSTPQLKQQNLNIGSRRRHKNASSIYDSVKDPYSYTSGFHSLTAFIQRRFSPQKTLRIAKALASIRPSFIATTKTLNRDDLIFMEKCFQRTLWEYEDFINACGTPTIVCRRTGEIAAVGKEFSILTGWRKEVLLGKEPNHNVNTGGSSGLLTGSTSRGSYTPRPYSSDQFNSSTTATPRTQPVFLAELLDDDSVIEFYEDFAKLAFGDSRGSVMTTCKLLKYKTKADSGVIASGNGEVGAAQNNEVGSGEANELNSSSNGTTSTGRGQRRWGKGEIAGEAGMNQLGFRDGKVECSYCWTVKRDVFDIPMLIVMNGEMECMEVNIITSGQPNYQAFRALVKD</sequence>
<keyword id="KW-0010">Activator</keyword>
<keyword id="KW-0238">DNA-binding</keyword>
<keyword id="KW-0312">Gluconeogenesis</keyword>
<keyword id="KW-0479">Metal-binding</keyword>
<keyword id="KW-0539">Nucleus</keyword>
<keyword id="KW-1185">Reference proteome</keyword>
<keyword id="KW-0804">Transcription</keyword>
<keyword id="KW-0805">Transcription regulation</keyword>
<keyword id="KW-0862">Zinc</keyword>
<protein>
    <recommendedName>
        <fullName>Transcription activator of gluconeogenesis MCYG_04674</fullName>
    </recommendedName>
</protein>